<keyword id="KW-0963">Cytoplasm</keyword>
<keyword id="KW-0324">Glycolysis</keyword>
<keyword id="KW-0520">NAD</keyword>
<keyword id="KW-0547">Nucleotide-binding</keyword>
<keyword id="KW-0560">Oxidoreductase</keyword>
<sequence length="339" mass="36095">MTVRVGINGFGRIGRNFYRALLAQQEQGTADIEVVAVNDITDNSTLAHLLKFDSILGRLPYDVSLEGEDTIVVGPAKIKALEVREGPAALPWGDLGVDVVVESTGLFTNAAKAKGHLDAGAKKVIISAPATDEDITVVLGVNDDKYDGSQNIISNASCTTNCLAPLTKVLDDEFGIVRGLMTTIHAYTQDQNLQDGPHKDLRRARAAALNIVPTSTGAAKAIGLVMPNLKGKLDGYALRVPIPTGSVTDLTAELKKPASVEDINAAFKAAAEGRLKGILKYYDAPIVSSDIVTDPHSSIFDSGLTKVIDNQAKVVSWYDNEWGYSNRLVDLVALVGKSL</sequence>
<comment type="function">
    <text evidence="3">Catalyzes the oxidative phosphorylation of glyceraldehyde 3-phosphate (G3P) to 1,3-bisphosphoglycerate (BPG) using the cofactor NAD. The first reaction step involves the formation of a hemiacetal intermediate between G3P and a cysteine residue, and this hemiacetal intermediate is then oxidized to a thioester, with concomitant reduction of NAD to NADH. The reduced NADH is then exchanged with the second NAD, and the thioester is attacked by a nucleophilic inorganic phosphate to produce BPG.</text>
</comment>
<comment type="catalytic activity">
    <reaction evidence="3">
        <text>D-glyceraldehyde 3-phosphate + phosphate + NAD(+) = (2R)-3-phospho-glyceroyl phosphate + NADH + H(+)</text>
        <dbReference type="Rhea" id="RHEA:10300"/>
        <dbReference type="ChEBI" id="CHEBI:15378"/>
        <dbReference type="ChEBI" id="CHEBI:43474"/>
        <dbReference type="ChEBI" id="CHEBI:57540"/>
        <dbReference type="ChEBI" id="CHEBI:57604"/>
        <dbReference type="ChEBI" id="CHEBI:57945"/>
        <dbReference type="ChEBI" id="CHEBI:59776"/>
        <dbReference type="EC" id="1.2.1.12"/>
    </reaction>
</comment>
<comment type="pathway">
    <text evidence="4">Carbohydrate degradation; glycolysis; pyruvate from D-glyceraldehyde 3-phosphate: step 1/5.</text>
</comment>
<comment type="subunit">
    <text evidence="2">Homotetramer.</text>
</comment>
<comment type="subcellular location">
    <subcellularLocation>
        <location evidence="4">Cytoplasm</location>
    </subcellularLocation>
</comment>
<comment type="similarity">
    <text evidence="4">Belongs to the glyceraldehyde-3-phosphate dehydrogenase family.</text>
</comment>
<feature type="chain" id="PRO_0000145667" description="Glyceraldehyde-3-phosphate dehydrogenase">
    <location>
        <begin position="1"/>
        <end position="339"/>
    </location>
</feature>
<feature type="active site" description="Nucleophile" evidence="1">
    <location>
        <position position="158"/>
    </location>
</feature>
<feature type="binding site" evidence="1">
    <location>
        <begin position="12"/>
        <end position="13"/>
    </location>
    <ligand>
        <name>NAD(+)</name>
        <dbReference type="ChEBI" id="CHEBI:57540"/>
    </ligand>
</feature>
<feature type="binding site" evidence="1">
    <location>
        <position position="39"/>
    </location>
    <ligand>
        <name>NAD(+)</name>
        <dbReference type="ChEBI" id="CHEBI:57540"/>
    </ligand>
</feature>
<feature type="binding site" evidence="1">
    <location>
        <position position="84"/>
    </location>
    <ligand>
        <name>NAD(+)</name>
        <dbReference type="ChEBI" id="CHEBI:57540"/>
    </ligand>
</feature>
<feature type="binding site" evidence="1">
    <location>
        <position position="127"/>
    </location>
    <ligand>
        <name>NAD(+)</name>
        <dbReference type="ChEBI" id="CHEBI:57540"/>
    </ligand>
</feature>
<feature type="binding site" evidence="1">
    <location>
        <begin position="157"/>
        <end position="159"/>
    </location>
    <ligand>
        <name>D-glyceraldehyde 3-phosphate</name>
        <dbReference type="ChEBI" id="CHEBI:59776"/>
    </ligand>
</feature>
<feature type="binding site" evidence="1">
    <location>
        <position position="188"/>
    </location>
    <ligand>
        <name>D-glyceraldehyde 3-phosphate</name>
        <dbReference type="ChEBI" id="CHEBI:59776"/>
    </ligand>
</feature>
<feature type="binding site" evidence="1">
    <location>
        <position position="203"/>
    </location>
    <ligand>
        <name>D-glyceraldehyde 3-phosphate</name>
        <dbReference type="ChEBI" id="CHEBI:59776"/>
    </ligand>
</feature>
<feature type="binding site" evidence="1">
    <location>
        <begin position="216"/>
        <end position="217"/>
    </location>
    <ligand>
        <name>D-glyceraldehyde 3-phosphate</name>
        <dbReference type="ChEBI" id="CHEBI:59776"/>
    </ligand>
</feature>
<feature type="binding site" evidence="1">
    <location>
        <position position="239"/>
    </location>
    <ligand>
        <name>D-glyceraldehyde 3-phosphate</name>
        <dbReference type="ChEBI" id="CHEBI:59776"/>
    </ligand>
</feature>
<feature type="binding site" evidence="1">
    <location>
        <position position="320"/>
    </location>
    <ligand>
        <name>NAD(+)</name>
        <dbReference type="ChEBI" id="CHEBI:57540"/>
    </ligand>
</feature>
<feature type="site" description="Activates thiol group during catalysis" evidence="1">
    <location>
        <position position="185"/>
    </location>
</feature>
<evidence type="ECO:0000250" key="1">
    <source>
        <dbReference type="UniProtKB" id="P00362"/>
    </source>
</evidence>
<evidence type="ECO:0000250" key="2">
    <source>
        <dbReference type="UniProtKB" id="P54226"/>
    </source>
</evidence>
<evidence type="ECO:0000250" key="3">
    <source>
        <dbReference type="UniProtKB" id="P9WN83"/>
    </source>
</evidence>
<evidence type="ECO:0000305" key="4"/>
<dbReference type="EC" id="1.2.1.12" evidence="3"/>
<dbReference type="EMBL" id="U82749">
    <property type="protein sequence ID" value="AAB95084.1"/>
    <property type="molecule type" value="Genomic_DNA"/>
</dbReference>
<dbReference type="RefSeq" id="WP_003876056.1">
    <property type="nucleotide sequence ID" value="NZ_NSFM01000019.1"/>
</dbReference>
<dbReference type="SMR" id="P94915"/>
<dbReference type="GeneID" id="75270743"/>
<dbReference type="OMA" id="YGYTCNM"/>
<dbReference type="OrthoDB" id="9803304at2"/>
<dbReference type="UniPathway" id="UPA00109">
    <property type="reaction ID" value="UER00184"/>
</dbReference>
<dbReference type="GO" id="GO:0005737">
    <property type="term" value="C:cytoplasm"/>
    <property type="evidence" value="ECO:0007669"/>
    <property type="project" value="UniProtKB-SubCell"/>
</dbReference>
<dbReference type="GO" id="GO:0004365">
    <property type="term" value="F:glyceraldehyde-3-phosphate dehydrogenase (NAD+) (phosphorylating) activity"/>
    <property type="evidence" value="ECO:0000250"/>
    <property type="project" value="UniProtKB"/>
</dbReference>
<dbReference type="GO" id="GO:0051287">
    <property type="term" value="F:NAD binding"/>
    <property type="evidence" value="ECO:0000250"/>
    <property type="project" value="UniProtKB"/>
</dbReference>
<dbReference type="GO" id="GO:0050661">
    <property type="term" value="F:NADP binding"/>
    <property type="evidence" value="ECO:0007669"/>
    <property type="project" value="InterPro"/>
</dbReference>
<dbReference type="GO" id="GO:0006006">
    <property type="term" value="P:glucose metabolic process"/>
    <property type="evidence" value="ECO:0007669"/>
    <property type="project" value="InterPro"/>
</dbReference>
<dbReference type="GO" id="GO:0006096">
    <property type="term" value="P:glycolytic process"/>
    <property type="evidence" value="ECO:0007669"/>
    <property type="project" value="UniProtKB-UniPathway"/>
</dbReference>
<dbReference type="CDD" id="cd18126">
    <property type="entry name" value="GAPDH_I_C"/>
    <property type="match status" value="1"/>
</dbReference>
<dbReference type="CDD" id="cd05214">
    <property type="entry name" value="GAPDH_I_N"/>
    <property type="match status" value="1"/>
</dbReference>
<dbReference type="FunFam" id="3.30.360.10:FF:000002">
    <property type="entry name" value="Glyceraldehyde-3-phosphate dehydrogenase"/>
    <property type="match status" value="1"/>
</dbReference>
<dbReference type="FunFam" id="3.40.50.720:FF:000001">
    <property type="entry name" value="Glyceraldehyde-3-phosphate dehydrogenase"/>
    <property type="match status" value="1"/>
</dbReference>
<dbReference type="Gene3D" id="3.30.360.10">
    <property type="entry name" value="Dihydrodipicolinate Reductase, domain 2"/>
    <property type="match status" value="1"/>
</dbReference>
<dbReference type="Gene3D" id="3.40.50.720">
    <property type="entry name" value="NAD(P)-binding Rossmann-like Domain"/>
    <property type="match status" value="1"/>
</dbReference>
<dbReference type="InterPro" id="IPR020831">
    <property type="entry name" value="GlycerAld/Erythrose_P_DH"/>
</dbReference>
<dbReference type="InterPro" id="IPR020830">
    <property type="entry name" value="GlycerAld_3-P_DH_AS"/>
</dbReference>
<dbReference type="InterPro" id="IPR020829">
    <property type="entry name" value="GlycerAld_3-P_DH_cat"/>
</dbReference>
<dbReference type="InterPro" id="IPR020828">
    <property type="entry name" value="GlycerAld_3-P_DH_NAD(P)-bd"/>
</dbReference>
<dbReference type="InterPro" id="IPR006424">
    <property type="entry name" value="Glyceraldehyde-3-P_DH_1"/>
</dbReference>
<dbReference type="InterPro" id="IPR036291">
    <property type="entry name" value="NAD(P)-bd_dom_sf"/>
</dbReference>
<dbReference type="NCBIfam" id="TIGR01534">
    <property type="entry name" value="GAPDH-I"/>
    <property type="match status" value="1"/>
</dbReference>
<dbReference type="PANTHER" id="PTHR43148">
    <property type="entry name" value="GLYCERALDEHYDE-3-PHOSPHATE DEHYDROGENASE 2"/>
    <property type="match status" value="1"/>
</dbReference>
<dbReference type="Pfam" id="PF02800">
    <property type="entry name" value="Gp_dh_C"/>
    <property type="match status" value="1"/>
</dbReference>
<dbReference type="Pfam" id="PF00044">
    <property type="entry name" value="Gp_dh_N"/>
    <property type="match status" value="1"/>
</dbReference>
<dbReference type="PIRSF" id="PIRSF000149">
    <property type="entry name" value="GAP_DH"/>
    <property type="match status" value="1"/>
</dbReference>
<dbReference type="PRINTS" id="PR00078">
    <property type="entry name" value="G3PDHDRGNASE"/>
</dbReference>
<dbReference type="SMART" id="SM00846">
    <property type="entry name" value="Gp_dh_N"/>
    <property type="match status" value="1"/>
</dbReference>
<dbReference type="SUPFAM" id="SSF55347">
    <property type="entry name" value="Glyceraldehyde-3-phosphate dehydrogenase-like, C-terminal domain"/>
    <property type="match status" value="1"/>
</dbReference>
<dbReference type="SUPFAM" id="SSF51735">
    <property type="entry name" value="NAD(P)-binding Rossmann-fold domains"/>
    <property type="match status" value="1"/>
</dbReference>
<dbReference type="PROSITE" id="PS00071">
    <property type="entry name" value="GAPDH"/>
    <property type="match status" value="1"/>
</dbReference>
<name>G3P_MYCAV</name>
<proteinExistence type="inferred from homology"/>
<accession>P94915</accession>
<protein>
    <recommendedName>
        <fullName evidence="3">Glyceraldehyde-3-phosphate dehydrogenase</fullName>
        <shortName evidence="3">GAPDH</shortName>
        <ecNumber evidence="3">1.2.1.12</ecNumber>
    </recommendedName>
    <alternativeName>
        <fullName evidence="3">NAD-dependent glyceraldehyde-3-phosphate dehydrogenase</fullName>
    </alternativeName>
</protein>
<reference key="1">
    <citation type="journal article" date="2000" name="Microb. Pathog.">
        <title>Sequence and characterization of the glyceraldehyde-3-phosphate dehydrogenase of Mycobacterium avium: correlation with an epidermal growth factor binding protein.</title>
        <authorList>
            <person name="Parker A.E."/>
            <person name="Bermudez L.E."/>
        </authorList>
    </citation>
    <scope>NUCLEOTIDE SEQUENCE [GENOMIC DNA]</scope>
    <source>
        <strain>101</strain>
    </source>
</reference>
<gene>
    <name type="primary">gapA</name>
    <name type="synonym">gap</name>
</gene>
<organism>
    <name type="scientific">Mycobacterium avium</name>
    <dbReference type="NCBI Taxonomy" id="1764"/>
    <lineage>
        <taxon>Bacteria</taxon>
        <taxon>Bacillati</taxon>
        <taxon>Actinomycetota</taxon>
        <taxon>Actinomycetes</taxon>
        <taxon>Mycobacteriales</taxon>
        <taxon>Mycobacteriaceae</taxon>
        <taxon>Mycobacterium</taxon>
        <taxon>Mycobacterium avium complex (MAC)</taxon>
    </lineage>
</organism>